<reference key="1">
    <citation type="journal article" date="2004" name="Nat. Biotechnol.">
        <title>The genome sequence of the capnophilic rumen bacterium Mannheimia succiniciproducens.</title>
        <authorList>
            <person name="Hong S.H."/>
            <person name="Kim J.S."/>
            <person name="Lee S.Y."/>
            <person name="In Y.H."/>
            <person name="Choi S.S."/>
            <person name="Rih J.-K."/>
            <person name="Kim C.H."/>
            <person name="Jeong H."/>
            <person name="Hur C.G."/>
            <person name="Kim J.J."/>
        </authorList>
    </citation>
    <scope>NUCLEOTIDE SEQUENCE [LARGE SCALE GENOMIC DNA]</scope>
    <source>
        <strain>KCTC 0769BP / MBEL55E</strain>
    </source>
</reference>
<protein>
    <recommendedName>
        <fullName evidence="1">Bifunctional glutamine synthetase adenylyltransferase/adenylyl-removing enzyme</fullName>
    </recommendedName>
    <alternativeName>
        <fullName evidence="1">ATP:glutamine synthetase adenylyltransferase</fullName>
    </alternativeName>
    <alternativeName>
        <fullName evidence="1">ATase</fullName>
    </alternativeName>
    <domain>
        <recommendedName>
            <fullName evidence="1">Glutamine synthetase adenylyl-L-tyrosine phosphorylase</fullName>
            <ecNumber evidence="1">2.7.7.89</ecNumber>
        </recommendedName>
        <alternativeName>
            <fullName evidence="1">Adenylyl removase</fullName>
            <shortName evidence="1">AR</shortName>
            <shortName evidence="1">AT-N</shortName>
        </alternativeName>
    </domain>
    <domain>
        <recommendedName>
            <fullName evidence="1">Glutamine synthetase adenylyl transferase</fullName>
            <ecNumber evidence="1">2.7.7.42</ecNumber>
        </recommendedName>
        <alternativeName>
            <fullName evidence="1">Adenylyl transferase</fullName>
            <shortName evidence="1">AT</shortName>
            <shortName evidence="1">AT-C</shortName>
        </alternativeName>
    </domain>
</protein>
<organism>
    <name type="scientific">Mannheimia succiniciproducens (strain KCTC 0769BP / MBEL55E)</name>
    <dbReference type="NCBI Taxonomy" id="221988"/>
    <lineage>
        <taxon>Bacteria</taxon>
        <taxon>Pseudomonadati</taxon>
        <taxon>Pseudomonadota</taxon>
        <taxon>Gammaproteobacteria</taxon>
        <taxon>Pasteurellales</taxon>
        <taxon>Pasteurellaceae</taxon>
        <taxon>Basfia</taxon>
    </lineage>
</organism>
<name>GLNE_MANSM</name>
<comment type="function">
    <text evidence="1">Involved in the regulation of glutamine synthetase GlnA, a key enzyme in the process to assimilate ammonia. When cellular nitrogen levels are high, the C-terminal adenylyl transferase (AT) inactivates GlnA by covalent transfer of an adenylyl group from ATP to specific tyrosine residue of GlnA, thus reducing its activity. Conversely, when nitrogen levels are low, the N-terminal adenylyl removase (AR) activates GlnA by removing the adenylyl group by phosphorolysis, increasing its activity. The regulatory region of GlnE binds the signal transduction protein PII (GlnB) which indicates the nitrogen status of the cell.</text>
</comment>
<comment type="catalytic activity">
    <reaction evidence="1">
        <text>[glutamine synthetase]-O(4)-(5'-adenylyl)-L-tyrosine + phosphate = [glutamine synthetase]-L-tyrosine + ADP</text>
        <dbReference type="Rhea" id="RHEA:43716"/>
        <dbReference type="Rhea" id="RHEA-COMP:10660"/>
        <dbReference type="Rhea" id="RHEA-COMP:10661"/>
        <dbReference type="ChEBI" id="CHEBI:43474"/>
        <dbReference type="ChEBI" id="CHEBI:46858"/>
        <dbReference type="ChEBI" id="CHEBI:83624"/>
        <dbReference type="ChEBI" id="CHEBI:456216"/>
        <dbReference type="EC" id="2.7.7.89"/>
    </reaction>
</comment>
<comment type="catalytic activity">
    <reaction evidence="1">
        <text>[glutamine synthetase]-L-tyrosine + ATP = [glutamine synthetase]-O(4)-(5'-adenylyl)-L-tyrosine + diphosphate</text>
        <dbReference type="Rhea" id="RHEA:18589"/>
        <dbReference type="Rhea" id="RHEA-COMP:10660"/>
        <dbReference type="Rhea" id="RHEA-COMP:10661"/>
        <dbReference type="ChEBI" id="CHEBI:30616"/>
        <dbReference type="ChEBI" id="CHEBI:33019"/>
        <dbReference type="ChEBI" id="CHEBI:46858"/>
        <dbReference type="ChEBI" id="CHEBI:83624"/>
        <dbReference type="EC" id="2.7.7.42"/>
    </reaction>
</comment>
<comment type="cofactor">
    <cofactor evidence="1">
        <name>Mg(2+)</name>
        <dbReference type="ChEBI" id="CHEBI:18420"/>
    </cofactor>
</comment>
<comment type="similarity">
    <text evidence="1">Belongs to the GlnE family.</text>
</comment>
<evidence type="ECO:0000255" key="1">
    <source>
        <dbReference type="HAMAP-Rule" id="MF_00802"/>
    </source>
</evidence>
<accession>Q65T25</accession>
<gene>
    <name evidence="1" type="primary">glnE</name>
    <name type="ordered locus">MS1278</name>
</gene>
<proteinExistence type="inferred from homology"/>
<keyword id="KW-0067">ATP-binding</keyword>
<keyword id="KW-0460">Magnesium</keyword>
<keyword id="KW-0511">Multifunctional enzyme</keyword>
<keyword id="KW-0547">Nucleotide-binding</keyword>
<keyword id="KW-0548">Nucleotidyltransferase</keyword>
<keyword id="KW-0808">Transferase</keyword>
<sequence>MTMPLPSIEQTLIQLADNLITHFPEQFNSQIYQQIQKDISNIKTPVGALMRAVSMSDFVTEILQKQPHFLAECWHKTPQLADCDSYAARLSVQLADIREETGLYKTLRDFRNQEMAKLSICQSLNSATVEEIFIRLSQLAEALIIGARDWLYQRACLDWGTPTDNQGNVQQLYILGMGKLGGFELNFSSDIDLIFTYPANGETVGSRKPIDNQKFFTRLGQRLISALDEFTEDGFVYRTDMRLRPFGDSGALALSFNAMESYYQEQGRDWERYAMIKGRILGADEQDPNVKTLRQLLRPFIYRRYIDFSVIQSLRDMKSKIEREVLRRGLVDNIKLGAGGIREIEFIVQVFQLIRGGREISLQQHELLKLLPEIEKLNLITADQHQDLLQAYLFLRRVENVLQAINDKQTQLLPADELNRCRLISATCEFTQWDNNHRPQKIQYPIHDWESFYQVLQQHQQKVRSVFNNLIGFNNENEADDSDNAWSDFLDADLEQGEIADILAQQGVSEEERDEIIGRLEAFRHSVSHRSIGIRGREVLTQLMPLLLLQIFSNKKYRTLLPRMLNIVEKILTRTTYLELLLENPQALTQLIELCAKSQLIAEQVAQHPILLDELLDREALLNPPSFEQYPAELQQYLLRLPEDDDEQFITALRQFKQATLLRIAAADILGALPVMKVSDHLTFLAETILHTVVNLAWQQITARFGKPEHLQNNEKGFLVAGYGKLGGIELGYRSDLDLVFLCDEIHSGQTVGGKKVIDSHQFYLRLAQKIISIFSMTTSAGILYEVDLRLRPSGEAGPLCCSFKAFEDYQMNEAWTWEKQSLVRSRAVYGEPALREKFELIRTGILASPRDLTQLKIDVREMREKMYRHFAGADDNKFNIKKDQGGITDIEFIAQYLVLAHAPENPNLAYWSDNVRIFDIMAEHGIITLNEAEKLKNCYTGLRNQIHHLNLLGEPPIVSKEEFADERRFIHQIWQKLFFE</sequence>
<feature type="chain" id="PRO_0000209252" description="Bifunctional glutamine synthetase adenylyltransferase/adenylyl-removing enzyme">
    <location>
        <begin position="1"/>
        <end position="981"/>
    </location>
</feature>
<feature type="region of interest" description="Adenylyl removase" evidence="1">
    <location>
        <begin position="1"/>
        <end position="473"/>
    </location>
</feature>
<feature type="region of interest" description="Adenylyl transferase" evidence="1">
    <location>
        <begin position="479"/>
        <end position="981"/>
    </location>
</feature>
<dbReference type="EC" id="2.7.7.89" evidence="1"/>
<dbReference type="EC" id="2.7.7.42" evidence="1"/>
<dbReference type="EMBL" id="AE016827">
    <property type="protein sequence ID" value="AAU37885.1"/>
    <property type="molecule type" value="Genomic_DNA"/>
</dbReference>
<dbReference type="RefSeq" id="WP_011200452.1">
    <property type="nucleotide sequence ID" value="NC_006300.1"/>
</dbReference>
<dbReference type="SMR" id="Q65T25"/>
<dbReference type="STRING" id="221988.MS1278"/>
<dbReference type="KEGG" id="msu:MS1278"/>
<dbReference type="eggNOG" id="COG1391">
    <property type="taxonomic scope" value="Bacteria"/>
</dbReference>
<dbReference type="HOGENOM" id="CLU_006233_0_1_6"/>
<dbReference type="OrthoDB" id="9759366at2"/>
<dbReference type="Proteomes" id="UP000000607">
    <property type="component" value="Chromosome"/>
</dbReference>
<dbReference type="GO" id="GO:0005829">
    <property type="term" value="C:cytosol"/>
    <property type="evidence" value="ECO:0007669"/>
    <property type="project" value="TreeGrafter"/>
</dbReference>
<dbReference type="GO" id="GO:0008882">
    <property type="term" value="F:[glutamate-ammonia-ligase] adenylyltransferase activity"/>
    <property type="evidence" value="ECO:0007669"/>
    <property type="project" value="UniProtKB-UniRule"/>
</dbReference>
<dbReference type="GO" id="GO:0047388">
    <property type="term" value="F:[glutamine synthetase]-adenylyl-L-tyrosine phosphorylase activity"/>
    <property type="evidence" value="ECO:0007669"/>
    <property type="project" value="UniProtKB-EC"/>
</dbReference>
<dbReference type="GO" id="GO:0005524">
    <property type="term" value="F:ATP binding"/>
    <property type="evidence" value="ECO:0007669"/>
    <property type="project" value="UniProtKB-UniRule"/>
</dbReference>
<dbReference type="GO" id="GO:0000287">
    <property type="term" value="F:magnesium ion binding"/>
    <property type="evidence" value="ECO:0007669"/>
    <property type="project" value="UniProtKB-UniRule"/>
</dbReference>
<dbReference type="GO" id="GO:0000820">
    <property type="term" value="P:regulation of glutamine family amino acid metabolic process"/>
    <property type="evidence" value="ECO:0007669"/>
    <property type="project" value="UniProtKB-UniRule"/>
</dbReference>
<dbReference type="CDD" id="cd05401">
    <property type="entry name" value="NT_GlnE_GlnD_like"/>
    <property type="match status" value="2"/>
</dbReference>
<dbReference type="FunFam" id="1.20.120.330:FF:000005">
    <property type="entry name" value="Bifunctional glutamine synthetase adenylyltransferase/adenylyl-removing enzyme"/>
    <property type="match status" value="1"/>
</dbReference>
<dbReference type="FunFam" id="3.30.460.10:FF:000009">
    <property type="entry name" value="Bifunctional glutamine synthetase adenylyltransferase/adenylyl-removing enzyme"/>
    <property type="match status" value="1"/>
</dbReference>
<dbReference type="FunFam" id="3.30.460.10:FF:000014">
    <property type="entry name" value="Bifunctional glutamine synthetase adenylyltransferase/adenylyl-removing enzyme"/>
    <property type="match status" value="1"/>
</dbReference>
<dbReference type="Gene3D" id="1.20.120.1510">
    <property type="match status" value="1"/>
</dbReference>
<dbReference type="Gene3D" id="3.30.460.10">
    <property type="entry name" value="Beta Polymerase, domain 2"/>
    <property type="match status" value="2"/>
</dbReference>
<dbReference type="Gene3D" id="1.10.4050.10">
    <property type="entry name" value="Glutamine synthase adenylyltransferase GlnE"/>
    <property type="match status" value="1"/>
</dbReference>
<dbReference type="Gene3D" id="1.20.120.330">
    <property type="entry name" value="Nucleotidyltransferases domain 2"/>
    <property type="match status" value="2"/>
</dbReference>
<dbReference type="HAMAP" id="MF_00802">
    <property type="entry name" value="GlnE"/>
    <property type="match status" value="1"/>
</dbReference>
<dbReference type="InterPro" id="IPR023057">
    <property type="entry name" value="GlnE"/>
</dbReference>
<dbReference type="InterPro" id="IPR005190">
    <property type="entry name" value="GlnE_rpt_dom"/>
</dbReference>
<dbReference type="InterPro" id="IPR043519">
    <property type="entry name" value="NT_sf"/>
</dbReference>
<dbReference type="InterPro" id="IPR013546">
    <property type="entry name" value="PII_UdlTrfase/GS_AdlTrfase"/>
</dbReference>
<dbReference type="NCBIfam" id="NF008292">
    <property type="entry name" value="PRK11072.1"/>
    <property type="match status" value="1"/>
</dbReference>
<dbReference type="PANTHER" id="PTHR30621:SF0">
    <property type="entry name" value="BIFUNCTIONAL GLUTAMINE SYNTHETASE ADENYLYLTRANSFERASE_ADENYLYL-REMOVING ENZYME"/>
    <property type="match status" value="1"/>
</dbReference>
<dbReference type="PANTHER" id="PTHR30621">
    <property type="entry name" value="GLUTAMINE SYNTHETASE ADENYLYLTRANSFERASE"/>
    <property type="match status" value="1"/>
</dbReference>
<dbReference type="Pfam" id="PF08335">
    <property type="entry name" value="GlnD_UR_UTase"/>
    <property type="match status" value="2"/>
</dbReference>
<dbReference type="Pfam" id="PF03710">
    <property type="entry name" value="GlnE"/>
    <property type="match status" value="2"/>
</dbReference>
<dbReference type="SUPFAM" id="SSF81301">
    <property type="entry name" value="Nucleotidyltransferase"/>
    <property type="match status" value="2"/>
</dbReference>
<dbReference type="SUPFAM" id="SSF81593">
    <property type="entry name" value="Nucleotidyltransferase substrate binding subunit/domain"/>
    <property type="match status" value="2"/>
</dbReference>